<gene>
    <name evidence="1" type="primary">rpl18</name>
    <name type="ordered locus">Mlab_0100</name>
</gene>
<accession>A2SPM1</accession>
<name>RL18_METLZ</name>
<keyword id="KW-1185">Reference proteome</keyword>
<keyword id="KW-0687">Ribonucleoprotein</keyword>
<keyword id="KW-0689">Ribosomal protein</keyword>
<keyword id="KW-0694">RNA-binding</keyword>
<keyword id="KW-0699">rRNA-binding</keyword>
<organism>
    <name type="scientific">Methanocorpusculum labreanum (strain ATCC 43576 / DSM 4855 / Z)</name>
    <dbReference type="NCBI Taxonomy" id="410358"/>
    <lineage>
        <taxon>Archaea</taxon>
        <taxon>Methanobacteriati</taxon>
        <taxon>Methanobacteriota</taxon>
        <taxon>Stenosarchaea group</taxon>
        <taxon>Methanomicrobia</taxon>
        <taxon>Methanomicrobiales</taxon>
        <taxon>Methanocorpusculaceae</taxon>
        <taxon>Methanocorpusculum</taxon>
    </lineage>
</organism>
<proteinExistence type="inferred from homology"/>
<reference key="1">
    <citation type="journal article" date="2009" name="Stand. Genomic Sci.">
        <title>Complete genome sequence of Methanocorpusculum labreanum type strain Z.</title>
        <authorList>
            <person name="Anderson I.J."/>
            <person name="Sieprawska-Lupa M."/>
            <person name="Goltsman E."/>
            <person name="Lapidus A."/>
            <person name="Copeland A."/>
            <person name="Glavina Del Rio T."/>
            <person name="Tice H."/>
            <person name="Dalin E."/>
            <person name="Barry K."/>
            <person name="Pitluck S."/>
            <person name="Hauser L."/>
            <person name="Land M."/>
            <person name="Lucas S."/>
            <person name="Richardson P."/>
            <person name="Whitman W.B."/>
            <person name="Kyrpides N.C."/>
        </authorList>
    </citation>
    <scope>NUCLEOTIDE SEQUENCE [LARGE SCALE GENOMIC DNA]</scope>
    <source>
        <strain>ATCC 43576 / DSM 4855 / Z</strain>
    </source>
</reference>
<protein>
    <recommendedName>
        <fullName evidence="1">Large ribosomal subunit protein uL18</fullName>
    </recommendedName>
    <alternativeName>
        <fullName evidence="2">50S ribosomal protein L18</fullName>
    </alternativeName>
</protein>
<feature type="chain" id="PRO_1000053056" description="Large ribosomal subunit protein uL18">
    <location>
        <begin position="1"/>
        <end position="174"/>
    </location>
</feature>
<evidence type="ECO:0000255" key="1">
    <source>
        <dbReference type="HAMAP-Rule" id="MF_01337"/>
    </source>
</evidence>
<evidence type="ECO:0000305" key="2"/>
<comment type="function">
    <text evidence="1">This is one of the proteins that bind and probably mediate the attachment of the 5S RNA into the large ribosomal subunit, where it forms part of the central protuberance.</text>
</comment>
<comment type="subunit">
    <text evidence="1">Part of the 50S ribosomal subunit. Contacts the 5S and 23S rRNAs.</text>
</comment>
<comment type="similarity">
    <text evidence="1">Belongs to the universal ribosomal protein uL18 family.</text>
</comment>
<dbReference type="EMBL" id="CP000559">
    <property type="protein sequence ID" value="ABN06277.1"/>
    <property type="molecule type" value="Genomic_DNA"/>
</dbReference>
<dbReference type="RefSeq" id="WP_011832478.1">
    <property type="nucleotide sequence ID" value="NC_008942.1"/>
</dbReference>
<dbReference type="SMR" id="A2SPM1"/>
<dbReference type="STRING" id="410358.Mlab_0100"/>
<dbReference type="GeneID" id="4795169"/>
<dbReference type="KEGG" id="mla:Mlab_0100"/>
<dbReference type="eggNOG" id="arCOG04088">
    <property type="taxonomic scope" value="Archaea"/>
</dbReference>
<dbReference type="HOGENOM" id="CLU_056222_2_0_2"/>
<dbReference type="OrthoDB" id="8644at2157"/>
<dbReference type="Proteomes" id="UP000000365">
    <property type="component" value="Chromosome"/>
</dbReference>
<dbReference type="GO" id="GO:0022625">
    <property type="term" value="C:cytosolic large ribosomal subunit"/>
    <property type="evidence" value="ECO:0007669"/>
    <property type="project" value="TreeGrafter"/>
</dbReference>
<dbReference type="GO" id="GO:0008097">
    <property type="term" value="F:5S rRNA binding"/>
    <property type="evidence" value="ECO:0007669"/>
    <property type="project" value="InterPro"/>
</dbReference>
<dbReference type="GO" id="GO:0003735">
    <property type="term" value="F:structural constituent of ribosome"/>
    <property type="evidence" value="ECO:0007669"/>
    <property type="project" value="InterPro"/>
</dbReference>
<dbReference type="GO" id="GO:0000027">
    <property type="term" value="P:ribosomal large subunit assembly"/>
    <property type="evidence" value="ECO:0007669"/>
    <property type="project" value="TreeGrafter"/>
</dbReference>
<dbReference type="GO" id="GO:0006412">
    <property type="term" value="P:translation"/>
    <property type="evidence" value="ECO:0007669"/>
    <property type="project" value="UniProtKB-UniRule"/>
</dbReference>
<dbReference type="CDD" id="cd00432">
    <property type="entry name" value="Ribosomal_L18_L5e"/>
    <property type="match status" value="1"/>
</dbReference>
<dbReference type="Gene3D" id="3.30.420.100">
    <property type="match status" value="1"/>
</dbReference>
<dbReference type="HAMAP" id="MF_01337_A">
    <property type="entry name" value="Ribosomal_uL18_A"/>
    <property type="match status" value="1"/>
</dbReference>
<dbReference type="InterPro" id="IPR005485">
    <property type="entry name" value="Rbsml_uL18_euk"/>
</dbReference>
<dbReference type="NCBIfam" id="NF006342">
    <property type="entry name" value="PRK08569.1"/>
    <property type="match status" value="1"/>
</dbReference>
<dbReference type="PANTHER" id="PTHR23410:SF12">
    <property type="entry name" value="LARGE RIBOSOMAL SUBUNIT PROTEIN UL18"/>
    <property type="match status" value="1"/>
</dbReference>
<dbReference type="PANTHER" id="PTHR23410">
    <property type="entry name" value="RIBOSOMAL PROTEIN L5-RELATED"/>
    <property type="match status" value="1"/>
</dbReference>
<dbReference type="Pfam" id="PF17144">
    <property type="entry name" value="Ribosomal_L5e"/>
    <property type="match status" value="2"/>
</dbReference>
<dbReference type="SUPFAM" id="SSF53137">
    <property type="entry name" value="Translational machinery components"/>
    <property type="match status" value="1"/>
</dbReference>
<sequence>MAINGRYFVQFRRRREGRTDYYQRQRLIVSGRNRMVVRKTNRHIIIQLIAAQMDGDYTLVHVNSRELVNFGYKGYLGNTPAAYLTGMLFAVRAQKAGYEGGIADIGLQVASTGARVFAAIKGAVDAGFDVPVGEAILPDDDRCNGAHIAEYDERFAGLVENVEATKDAIMKELE</sequence>